<feature type="chain" id="PRO_0000368331" description="ATP synthase subunit b">
    <location>
        <begin position="1"/>
        <end position="161"/>
    </location>
</feature>
<feature type="transmembrane region" description="Helical" evidence="1">
    <location>
        <begin position="2"/>
        <end position="22"/>
    </location>
</feature>
<sequence length="161" mass="18325">MVIEWGTALYQLLAFAVLLLILSKFALKPLLGVMQKRQDMINEQIDSAEQNRKEAEKLLAEQREEMQKARVEARELIENAKKAGEQQGQEMVRAAKEEAQRIHQQALAEIQNEKDQAVAALREQVASLSVLIAQKVIEKELDASEQDQLVQEYLKQASEEL</sequence>
<comment type="function">
    <text evidence="1">F(1)F(0) ATP synthase produces ATP from ADP in the presence of a proton or sodium gradient. F-type ATPases consist of two structural domains, F(1) containing the extramembraneous catalytic core and F(0) containing the membrane proton channel, linked together by a central stalk and a peripheral stalk. During catalysis, ATP synthesis in the catalytic domain of F(1) is coupled via a rotary mechanism of the central stalk subunits to proton translocation.</text>
</comment>
<comment type="function">
    <text evidence="1">Component of the F(0) channel, it forms part of the peripheral stalk, linking F(1) to F(0).</text>
</comment>
<comment type="subunit">
    <text evidence="1">F-type ATPases have 2 components, F(1) - the catalytic core - and F(0) - the membrane proton channel. F(1) has five subunits: alpha(3), beta(3), gamma(1), delta(1), epsilon(1). F(0) has three main subunits: a(1), b(2) and c(10-14). The alpha and beta chains form an alternating ring which encloses part of the gamma chain. F(1) is attached to F(0) by a central stalk formed by the gamma and epsilon chains, while a peripheral stalk is formed by the delta and b chains.</text>
</comment>
<comment type="subcellular location">
    <subcellularLocation>
        <location evidence="1">Cell membrane</location>
        <topology evidence="1">Single-pass membrane protein</topology>
    </subcellularLocation>
</comment>
<comment type="similarity">
    <text evidence="1">Belongs to the ATPase B chain family.</text>
</comment>
<evidence type="ECO:0000255" key="1">
    <source>
        <dbReference type="HAMAP-Rule" id="MF_01398"/>
    </source>
</evidence>
<protein>
    <recommendedName>
        <fullName evidence="1">ATP synthase subunit b</fullName>
    </recommendedName>
    <alternativeName>
        <fullName evidence="1">ATP synthase F(0) sector subunit b</fullName>
    </alternativeName>
    <alternativeName>
        <fullName evidence="1">ATPase subunit I</fullName>
    </alternativeName>
    <alternativeName>
        <fullName evidence="1">F-type ATPase subunit b</fullName>
        <shortName evidence="1">F-ATPase subunit b</shortName>
    </alternativeName>
</protein>
<dbReference type="EMBL" id="AP006627">
    <property type="protein sequence ID" value="BAD66386.1"/>
    <property type="molecule type" value="Genomic_DNA"/>
</dbReference>
<dbReference type="RefSeq" id="WP_011248689.1">
    <property type="nucleotide sequence ID" value="NC_006582.1"/>
</dbReference>
<dbReference type="SMR" id="Q5WB74"/>
<dbReference type="STRING" id="66692.ABC3855"/>
<dbReference type="GeneID" id="86928180"/>
<dbReference type="KEGG" id="bcl:ABC3855"/>
<dbReference type="eggNOG" id="COG0711">
    <property type="taxonomic scope" value="Bacteria"/>
</dbReference>
<dbReference type="HOGENOM" id="CLU_079215_4_2_9"/>
<dbReference type="OrthoDB" id="282095at2"/>
<dbReference type="Proteomes" id="UP000001168">
    <property type="component" value="Chromosome"/>
</dbReference>
<dbReference type="GO" id="GO:0005886">
    <property type="term" value="C:plasma membrane"/>
    <property type="evidence" value="ECO:0007669"/>
    <property type="project" value="UniProtKB-SubCell"/>
</dbReference>
<dbReference type="GO" id="GO:0045259">
    <property type="term" value="C:proton-transporting ATP synthase complex"/>
    <property type="evidence" value="ECO:0007669"/>
    <property type="project" value="UniProtKB-KW"/>
</dbReference>
<dbReference type="GO" id="GO:0046933">
    <property type="term" value="F:proton-transporting ATP synthase activity, rotational mechanism"/>
    <property type="evidence" value="ECO:0007669"/>
    <property type="project" value="UniProtKB-UniRule"/>
</dbReference>
<dbReference type="GO" id="GO:0046961">
    <property type="term" value="F:proton-transporting ATPase activity, rotational mechanism"/>
    <property type="evidence" value="ECO:0007669"/>
    <property type="project" value="TreeGrafter"/>
</dbReference>
<dbReference type="CDD" id="cd06503">
    <property type="entry name" value="ATP-synt_Fo_b"/>
    <property type="match status" value="1"/>
</dbReference>
<dbReference type="Gene3D" id="1.20.5.620">
    <property type="entry name" value="F1F0 ATP synthase subunit B, membrane domain"/>
    <property type="match status" value="1"/>
</dbReference>
<dbReference type="HAMAP" id="MF_01398">
    <property type="entry name" value="ATP_synth_b_bprime"/>
    <property type="match status" value="1"/>
</dbReference>
<dbReference type="InterPro" id="IPR028987">
    <property type="entry name" value="ATP_synth_B-like_membr_sf"/>
</dbReference>
<dbReference type="InterPro" id="IPR002146">
    <property type="entry name" value="ATP_synth_b/b'su_bac/chlpt"/>
</dbReference>
<dbReference type="InterPro" id="IPR005864">
    <property type="entry name" value="ATP_synth_F0_bsu_bac"/>
</dbReference>
<dbReference type="InterPro" id="IPR050059">
    <property type="entry name" value="ATP_synthase_B_chain"/>
</dbReference>
<dbReference type="NCBIfam" id="TIGR01144">
    <property type="entry name" value="ATP_synt_b"/>
    <property type="match status" value="1"/>
</dbReference>
<dbReference type="PANTHER" id="PTHR33445:SF1">
    <property type="entry name" value="ATP SYNTHASE SUBUNIT B"/>
    <property type="match status" value="1"/>
</dbReference>
<dbReference type="PANTHER" id="PTHR33445">
    <property type="entry name" value="ATP SYNTHASE SUBUNIT B', CHLOROPLASTIC"/>
    <property type="match status" value="1"/>
</dbReference>
<dbReference type="Pfam" id="PF00430">
    <property type="entry name" value="ATP-synt_B"/>
    <property type="match status" value="1"/>
</dbReference>
<dbReference type="SUPFAM" id="SSF81573">
    <property type="entry name" value="F1F0 ATP synthase subunit B, membrane domain"/>
    <property type="match status" value="1"/>
</dbReference>
<proteinExistence type="inferred from homology"/>
<organism>
    <name type="scientific">Shouchella clausii (strain KSM-K16)</name>
    <name type="common">Alkalihalobacillus clausii</name>
    <dbReference type="NCBI Taxonomy" id="66692"/>
    <lineage>
        <taxon>Bacteria</taxon>
        <taxon>Bacillati</taxon>
        <taxon>Bacillota</taxon>
        <taxon>Bacilli</taxon>
        <taxon>Bacillales</taxon>
        <taxon>Bacillaceae</taxon>
        <taxon>Shouchella</taxon>
    </lineage>
</organism>
<reference key="1">
    <citation type="submission" date="2003-10" db="EMBL/GenBank/DDBJ databases">
        <title>The complete genome sequence of the alkaliphilic Bacillus clausii KSM-K16.</title>
        <authorList>
            <person name="Takaki Y."/>
            <person name="Kageyama Y."/>
            <person name="Shimamura S."/>
            <person name="Suzuki H."/>
            <person name="Nishi S."/>
            <person name="Hatada Y."/>
            <person name="Kawai S."/>
            <person name="Ito S."/>
            <person name="Horikoshi K."/>
        </authorList>
    </citation>
    <scope>NUCLEOTIDE SEQUENCE [LARGE SCALE GENOMIC DNA]</scope>
    <source>
        <strain>KSM-K16</strain>
    </source>
</reference>
<keyword id="KW-0066">ATP synthesis</keyword>
<keyword id="KW-1003">Cell membrane</keyword>
<keyword id="KW-0138">CF(0)</keyword>
<keyword id="KW-0375">Hydrogen ion transport</keyword>
<keyword id="KW-0406">Ion transport</keyword>
<keyword id="KW-0472">Membrane</keyword>
<keyword id="KW-1185">Reference proteome</keyword>
<keyword id="KW-0812">Transmembrane</keyword>
<keyword id="KW-1133">Transmembrane helix</keyword>
<keyword id="KW-0813">Transport</keyword>
<name>ATPF_SHOC1</name>
<accession>Q5WB74</accession>
<gene>
    <name evidence="1" type="primary">atpF</name>
    <name type="ordered locus">ABC3855</name>
</gene>